<organism>
    <name type="scientific">Pectobacterium atrosepticum (strain SCRI 1043 / ATCC BAA-672)</name>
    <name type="common">Erwinia carotovora subsp. atroseptica</name>
    <dbReference type="NCBI Taxonomy" id="218491"/>
    <lineage>
        <taxon>Bacteria</taxon>
        <taxon>Pseudomonadati</taxon>
        <taxon>Pseudomonadota</taxon>
        <taxon>Gammaproteobacteria</taxon>
        <taxon>Enterobacterales</taxon>
        <taxon>Pectobacteriaceae</taxon>
        <taxon>Pectobacterium</taxon>
    </lineage>
</organism>
<reference key="1">
    <citation type="journal article" date="2004" name="Proc. Natl. Acad. Sci. U.S.A.">
        <title>Genome sequence of the enterobacterial phytopathogen Erwinia carotovora subsp. atroseptica and characterization of virulence factors.</title>
        <authorList>
            <person name="Bell K.S."/>
            <person name="Sebaihia M."/>
            <person name="Pritchard L."/>
            <person name="Holden M.T.G."/>
            <person name="Hyman L.J."/>
            <person name="Holeva M.C."/>
            <person name="Thomson N.R."/>
            <person name="Bentley S.D."/>
            <person name="Churcher L.J.C."/>
            <person name="Mungall K."/>
            <person name="Atkin R."/>
            <person name="Bason N."/>
            <person name="Brooks K."/>
            <person name="Chillingworth T."/>
            <person name="Clark K."/>
            <person name="Doggett J."/>
            <person name="Fraser A."/>
            <person name="Hance Z."/>
            <person name="Hauser H."/>
            <person name="Jagels K."/>
            <person name="Moule S."/>
            <person name="Norbertczak H."/>
            <person name="Ormond D."/>
            <person name="Price C."/>
            <person name="Quail M.A."/>
            <person name="Sanders M."/>
            <person name="Walker D."/>
            <person name="Whitehead S."/>
            <person name="Salmond G.P.C."/>
            <person name="Birch P.R.J."/>
            <person name="Parkhill J."/>
            <person name="Toth I.K."/>
        </authorList>
    </citation>
    <scope>NUCLEOTIDE SEQUENCE [LARGE SCALE GENOMIC DNA]</scope>
    <source>
        <strain>SCRI 1043 / ATCC BAA-672</strain>
    </source>
</reference>
<evidence type="ECO:0000255" key="1">
    <source>
        <dbReference type="HAMAP-Rule" id="MF_01588"/>
    </source>
</evidence>
<keyword id="KW-0227">DNA damage</keyword>
<keyword id="KW-0234">DNA repair</keyword>
<keyword id="KW-0235">DNA replication</keyword>
<keyword id="KW-0436">Ligase</keyword>
<keyword id="KW-0460">Magnesium</keyword>
<keyword id="KW-0464">Manganese</keyword>
<keyword id="KW-0479">Metal-binding</keyword>
<keyword id="KW-0520">NAD</keyword>
<keyword id="KW-1185">Reference proteome</keyword>
<keyword id="KW-0862">Zinc</keyword>
<comment type="function">
    <text evidence="1">DNA ligase that catalyzes the formation of phosphodiester linkages between 5'-phosphoryl and 3'-hydroxyl groups in double-stranded DNA using NAD as a coenzyme and as the energy source for the reaction. It is essential for DNA replication and repair of damaged DNA.</text>
</comment>
<comment type="catalytic activity">
    <reaction evidence="1">
        <text>NAD(+) + (deoxyribonucleotide)n-3'-hydroxyl + 5'-phospho-(deoxyribonucleotide)m = (deoxyribonucleotide)n+m + AMP + beta-nicotinamide D-nucleotide.</text>
        <dbReference type="EC" id="6.5.1.2"/>
    </reaction>
</comment>
<comment type="cofactor">
    <cofactor evidence="1">
        <name>Mg(2+)</name>
        <dbReference type="ChEBI" id="CHEBI:18420"/>
    </cofactor>
    <cofactor evidence="1">
        <name>Mn(2+)</name>
        <dbReference type="ChEBI" id="CHEBI:29035"/>
    </cofactor>
</comment>
<comment type="similarity">
    <text evidence="1">Belongs to the NAD-dependent DNA ligase family. LigA subfamily.</text>
</comment>
<dbReference type="EC" id="6.5.1.2" evidence="1"/>
<dbReference type="EMBL" id="BX950851">
    <property type="protein sequence ID" value="CAG76481.1"/>
    <property type="molecule type" value="Genomic_DNA"/>
</dbReference>
<dbReference type="SMR" id="Q6D165"/>
<dbReference type="STRING" id="218491.ECA3583"/>
<dbReference type="KEGG" id="eca:ECA3583"/>
<dbReference type="PATRIC" id="fig|218491.5.peg.3633"/>
<dbReference type="eggNOG" id="COG0272">
    <property type="taxonomic scope" value="Bacteria"/>
</dbReference>
<dbReference type="HOGENOM" id="CLU_007764_2_1_6"/>
<dbReference type="Proteomes" id="UP000007966">
    <property type="component" value="Chromosome"/>
</dbReference>
<dbReference type="GO" id="GO:0005829">
    <property type="term" value="C:cytosol"/>
    <property type="evidence" value="ECO:0007669"/>
    <property type="project" value="TreeGrafter"/>
</dbReference>
<dbReference type="GO" id="GO:0003677">
    <property type="term" value="F:DNA binding"/>
    <property type="evidence" value="ECO:0007669"/>
    <property type="project" value="InterPro"/>
</dbReference>
<dbReference type="GO" id="GO:0003911">
    <property type="term" value="F:DNA ligase (NAD+) activity"/>
    <property type="evidence" value="ECO:0007669"/>
    <property type="project" value="UniProtKB-UniRule"/>
</dbReference>
<dbReference type="GO" id="GO:0046872">
    <property type="term" value="F:metal ion binding"/>
    <property type="evidence" value="ECO:0007669"/>
    <property type="project" value="UniProtKB-KW"/>
</dbReference>
<dbReference type="GO" id="GO:0006281">
    <property type="term" value="P:DNA repair"/>
    <property type="evidence" value="ECO:0007669"/>
    <property type="project" value="UniProtKB-KW"/>
</dbReference>
<dbReference type="GO" id="GO:0006260">
    <property type="term" value="P:DNA replication"/>
    <property type="evidence" value="ECO:0007669"/>
    <property type="project" value="UniProtKB-KW"/>
</dbReference>
<dbReference type="CDD" id="cd17748">
    <property type="entry name" value="BRCT_DNA_ligase_like"/>
    <property type="match status" value="1"/>
</dbReference>
<dbReference type="CDD" id="cd00114">
    <property type="entry name" value="LIGANc"/>
    <property type="match status" value="1"/>
</dbReference>
<dbReference type="FunFam" id="1.10.150.20:FF:000006">
    <property type="entry name" value="DNA ligase"/>
    <property type="match status" value="1"/>
</dbReference>
<dbReference type="FunFam" id="1.10.150.20:FF:000007">
    <property type="entry name" value="DNA ligase"/>
    <property type="match status" value="1"/>
</dbReference>
<dbReference type="FunFam" id="1.10.287.610:FF:000002">
    <property type="entry name" value="DNA ligase"/>
    <property type="match status" value="1"/>
</dbReference>
<dbReference type="FunFam" id="2.40.50.140:FF:000012">
    <property type="entry name" value="DNA ligase"/>
    <property type="match status" value="1"/>
</dbReference>
<dbReference type="FunFam" id="3.30.470.30:FF:000001">
    <property type="entry name" value="DNA ligase"/>
    <property type="match status" value="1"/>
</dbReference>
<dbReference type="FunFam" id="3.40.50.10190:FF:000004">
    <property type="entry name" value="DNA ligase"/>
    <property type="match status" value="1"/>
</dbReference>
<dbReference type="FunFam" id="6.20.10.30:FF:000001">
    <property type="entry name" value="DNA ligase"/>
    <property type="match status" value="1"/>
</dbReference>
<dbReference type="Gene3D" id="6.20.10.30">
    <property type="match status" value="1"/>
</dbReference>
<dbReference type="Gene3D" id="1.10.150.20">
    <property type="entry name" value="5' to 3' exonuclease, C-terminal subdomain"/>
    <property type="match status" value="2"/>
</dbReference>
<dbReference type="Gene3D" id="3.40.50.10190">
    <property type="entry name" value="BRCT domain"/>
    <property type="match status" value="1"/>
</dbReference>
<dbReference type="Gene3D" id="3.30.470.30">
    <property type="entry name" value="DNA ligase/mRNA capping enzyme"/>
    <property type="match status" value="1"/>
</dbReference>
<dbReference type="Gene3D" id="1.10.287.610">
    <property type="entry name" value="Helix hairpin bin"/>
    <property type="match status" value="1"/>
</dbReference>
<dbReference type="Gene3D" id="2.40.50.140">
    <property type="entry name" value="Nucleic acid-binding proteins"/>
    <property type="match status" value="1"/>
</dbReference>
<dbReference type="HAMAP" id="MF_01588">
    <property type="entry name" value="DNA_ligase_A"/>
    <property type="match status" value="1"/>
</dbReference>
<dbReference type="InterPro" id="IPR001357">
    <property type="entry name" value="BRCT_dom"/>
</dbReference>
<dbReference type="InterPro" id="IPR036420">
    <property type="entry name" value="BRCT_dom_sf"/>
</dbReference>
<dbReference type="InterPro" id="IPR041663">
    <property type="entry name" value="DisA/LigA_HHH"/>
</dbReference>
<dbReference type="InterPro" id="IPR001679">
    <property type="entry name" value="DNA_ligase"/>
</dbReference>
<dbReference type="InterPro" id="IPR018239">
    <property type="entry name" value="DNA_ligase_AS"/>
</dbReference>
<dbReference type="InterPro" id="IPR033136">
    <property type="entry name" value="DNA_ligase_CS"/>
</dbReference>
<dbReference type="InterPro" id="IPR013839">
    <property type="entry name" value="DNAligase_adenylation"/>
</dbReference>
<dbReference type="InterPro" id="IPR013840">
    <property type="entry name" value="DNAligase_N"/>
</dbReference>
<dbReference type="InterPro" id="IPR003583">
    <property type="entry name" value="Hlx-hairpin-Hlx_DNA-bd_motif"/>
</dbReference>
<dbReference type="InterPro" id="IPR012340">
    <property type="entry name" value="NA-bd_OB-fold"/>
</dbReference>
<dbReference type="InterPro" id="IPR004150">
    <property type="entry name" value="NAD_DNA_ligase_OB"/>
</dbReference>
<dbReference type="InterPro" id="IPR010994">
    <property type="entry name" value="RuvA_2-like"/>
</dbReference>
<dbReference type="InterPro" id="IPR004149">
    <property type="entry name" value="Znf_DNAligase_C4"/>
</dbReference>
<dbReference type="NCBIfam" id="TIGR00575">
    <property type="entry name" value="dnlj"/>
    <property type="match status" value="1"/>
</dbReference>
<dbReference type="NCBIfam" id="NF005932">
    <property type="entry name" value="PRK07956.1"/>
    <property type="match status" value="1"/>
</dbReference>
<dbReference type="PANTHER" id="PTHR23389">
    <property type="entry name" value="CHROMOSOME TRANSMISSION FIDELITY FACTOR 18"/>
    <property type="match status" value="1"/>
</dbReference>
<dbReference type="PANTHER" id="PTHR23389:SF9">
    <property type="entry name" value="DNA LIGASE"/>
    <property type="match status" value="1"/>
</dbReference>
<dbReference type="Pfam" id="PF00533">
    <property type="entry name" value="BRCT"/>
    <property type="match status" value="1"/>
</dbReference>
<dbReference type="Pfam" id="PF01653">
    <property type="entry name" value="DNA_ligase_aden"/>
    <property type="match status" value="1"/>
</dbReference>
<dbReference type="Pfam" id="PF03120">
    <property type="entry name" value="DNA_ligase_OB"/>
    <property type="match status" value="1"/>
</dbReference>
<dbReference type="Pfam" id="PF03119">
    <property type="entry name" value="DNA_ligase_ZBD"/>
    <property type="match status" value="1"/>
</dbReference>
<dbReference type="Pfam" id="PF12826">
    <property type="entry name" value="HHH_2"/>
    <property type="match status" value="1"/>
</dbReference>
<dbReference type="Pfam" id="PF14520">
    <property type="entry name" value="HHH_5"/>
    <property type="match status" value="1"/>
</dbReference>
<dbReference type="Pfam" id="PF22745">
    <property type="entry name" value="Nlig-Ia"/>
    <property type="match status" value="1"/>
</dbReference>
<dbReference type="PIRSF" id="PIRSF001604">
    <property type="entry name" value="LigA"/>
    <property type="match status" value="1"/>
</dbReference>
<dbReference type="SMART" id="SM00292">
    <property type="entry name" value="BRCT"/>
    <property type="match status" value="1"/>
</dbReference>
<dbReference type="SMART" id="SM00278">
    <property type="entry name" value="HhH1"/>
    <property type="match status" value="4"/>
</dbReference>
<dbReference type="SMART" id="SM00532">
    <property type="entry name" value="LIGANc"/>
    <property type="match status" value="1"/>
</dbReference>
<dbReference type="SUPFAM" id="SSF52113">
    <property type="entry name" value="BRCT domain"/>
    <property type="match status" value="1"/>
</dbReference>
<dbReference type="SUPFAM" id="SSF56091">
    <property type="entry name" value="DNA ligase/mRNA capping enzyme, catalytic domain"/>
    <property type="match status" value="1"/>
</dbReference>
<dbReference type="SUPFAM" id="SSF50249">
    <property type="entry name" value="Nucleic acid-binding proteins"/>
    <property type="match status" value="1"/>
</dbReference>
<dbReference type="SUPFAM" id="SSF47781">
    <property type="entry name" value="RuvA domain 2-like"/>
    <property type="match status" value="1"/>
</dbReference>
<dbReference type="PROSITE" id="PS50172">
    <property type="entry name" value="BRCT"/>
    <property type="match status" value="1"/>
</dbReference>
<dbReference type="PROSITE" id="PS01055">
    <property type="entry name" value="DNA_LIGASE_N1"/>
    <property type="match status" value="1"/>
</dbReference>
<dbReference type="PROSITE" id="PS01056">
    <property type="entry name" value="DNA_LIGASE_N2"/>
    <property type="match status" value="1"/>
</dbReference>
<gene>
    <name evidence="1" type="primary">ligA</name>
    <name type="ordered locus">ECA3583</name>
</gene>
<feature type="chain" id="PRO_0000313229" description="DNA ligase">
    <location>
        <begin position="1"/>
        <end position="681"/>
    </location>
</feature>
<feature type="domain" description="BRCT" evidence="1">
    <location>
        <begin position="596"/>
        <end position="681"/>
    </location>
</feature>
<feature type="active site" description="N6-AMP-lysine intermediate" evidence="1">
    <location>
        <position position="115"/>
    </location>
</feature>
<feature type="binding site" evidence="1">
    <location>
        <begin position="32"/>
        <end position="36"/>
    </location>
    <ligand>
        <name>NAD(+)</name>
        <dbReference type="ChEBI" id="CHEBI:57540"/>
    </ligand>
</feature>
<feature type="binding site" evidence="1">
    <location>
        <begin position="81"/>
        <end position="82"/>
    </location>
    <ligand>
        <name>NAD(+)</name>
        <dbReference type="ChEBI" id="CHEBI:57540"/>
    </ligand>
</feature>
<feature type="binding site" evidence="1">
    <location>
        <position position="113"/>
    </location>
    <ligand>
        <name>NAD(+)</name>
        <dbReference type="ChEBI" id="CHEBI:57540"/>
    </ligand>
</feature>
<feature type="binding site" evidence="1">
    <location>
        <position position="136"/>
    </location>
    <ligand>
        <name>NAD(+)</name>
        <dbReference type="ChEBI" id="CHEBI:57540"/>
    </ligand>
</feature>
<feature type="binding site" evidence="1">
    <location>
        <position position="173"/>
    </location>
    <ligand>
        <name>NAD(+)</name>
        <dbReference type="ChEBI" id="CHEBI:57540"/>
    </ligand>
</feature>
<feature type="binding site" evidence="1">
    <location>
        <position position="290"/>
    </location>
    <ligand>
        <name>NAD(+)</name>
        <dbReference type="ChEBI" id="CHEBI:57540"/>
    </ligand>
</feature>
<feature type="binding site" evidence="1">
    <location>
        <position position="314"/>
    </location>
    <ligand>
        <name>NAD(+)</name>
        <dbReference type="ChEBI" id="CHEBI:57540"/>
    </ligand>
</feature>
<feature type="binding site" evidence="1">
    <location>
        <position position="408"/>
    </location>
    <ligand>
        <name>Zn(2+)</name>
        <dbReference type="ChEBI" id="CHEBI:29105"/>
    </ligand>
</feature>
<feature type="binding site" evidence="1">
    <location>
        <position position="411"/>
    </location>
    <ligand>
        <name>Zn(2+)</name>
        <dbReference type="ChEBI" id="CHEBI:29105"/>
    </ligand>
</feature>
<feature type="binding site" evidence="1">
    <location>
        <position position="426"/>
    </location>
    <ligand>
        <name>Zn(2+)</name>
        <dbReference type="ChEBI" id="CHEBI:29105"/>
    </ligand>
</feature>
<feature type="binding site" evidence="1">
    <location>
        <position position="432"/>
    </location>
    <ligand>
        <name>Zn(2+)</name>
        <dbReference type="ChEBI" id="CHEBI:29105"/>
    </ligand>
</feature>
<sequence length="681" mass="74483">MNAVALRVAELRRVLRHHEYKYHVEDAPEIPDIEYDKLMQELKALEADHPELVTSDSPTQRVGAAPLAAFEQVRHEVPMLSLDNVFDEESYLAFSKRIGDRLKNGDDLTFCCELKLDGLAVSLLYEEGILVQAATRGDGTTGENITSNIRTVGAIPLRLEGENIPRRVEVRGEVFMKHGGFEKLNEEARRTGSKVFANPRNAAAGSLRQLDPRITAKRPLTFFCYGVGLLEGGELPASHWERLMQFKAWGLPVSDRIKLCTGPAEVLDFYRQVEQTRSSLGFDIDGVVVKVDSLALQERLGFVARAPRWAVAFKFPAQEQLTWVRDVEFQVGRTGAITPVARLEPVAVAGVIVSNATLHNADEIERLGLQIGDRVIVRRAGDVIPQIVGIVESERPETVQPIVFPAACPVCGSDVERVEGEAVTRCTGGLICGAQRKEALKHFVSRRALDVEGMGDKIIDQLVEKEYVKTPADLFRLSAGIMTGLDRMGPKSAMNLVNALEKAKSTTLARFLYALGIRDVGESTAANLAAHFGSLETLFAADEDALLEVPDVGKIVAAHVRHFLEEEHNQTVIRELTDPAGINIYWPEVKVVNAEEIDSPFAGKTVVLTGSLSILSRDEAKDRLTALGAKVSGSVSKKTDMVIAGEAAGSKLAKAQELGIPVIDEAEMIRLLNNHGDVSTL</sequence>
<name>DNLJ_PECAS</name>
<proteinExistence type="inferred from homology"/>
<protein>
    <recommendedName>
        <fullName evidence="1">DNA ligase</fullName>
        <ecNumber evidence="1">6.5.1.2</ecNumber>
    </recommendedName>
    <alternativeName>
        <fullName evidence="1">Polydeoxyribonucleotide synthase [NAD(+)]</fullName>
    </alternativeName>
</protein>
<accession>Q6D165</accession>